<organism>
    <name type="scientific">Bacteroides thetaiotaomicron (strain ATCC 29148 / DSM 2079 / JCM 5827 / CCUG 10774 / NCTC 10582 / VPI-5482 / E50)</name>
    <dbReference type="NCBI Taxonomy" id="226186"/>
    <lineage>
        <taxon>Bacteria</taxon>
        <taxon>Pseudomonadati</taxon>
        <taxon>Bacteroidota</taxon>
        <taxon>Bacteroidia</taxon>
        <taxon>Bacteroidales</taxon>
        <taxon>Bacteroidaceae</taxon>
        <taxon>Bacteroides</taxon>
    </lineage>
</organism>
<gene>
    <name evidence="1" type="primary">tyrS</name>
    <name type="ordered locus">BT_3230</name>
</gene>
<evidence type="ECO:0000255" key="1">
    <source>
        <dbReference type="HAMAP-Rule" id="MF_02006"/>
    </source>
</evidence>
<reference key="1">
    <citation type="journal article" date="2003" name="Science">
        <title>A genomic view of the human-Bacteroides thetaiotaomicron symbiosis.</title>
        <authorList>
            <person name="Xu J."/>
            <person name="Bjursell M.K."/>
            <person name="Himrod J."/>
            <person name="Deng S."/>
            <person name="Carmichael L.K."/>
            <person name="Chiang H.C."/>
            <person name="Hooper L.V."/>
            <person name="Gordon J.I."/>
        </authorList>
    </citation>
    <scope>NUCLEOTIDE SEQUENCE [LARGE SCALE GENOMIC DNA]</scope>
    <source>
        <strain>ATCC 29148 / DSM 2079 / JCM 5827 / CCUG 10774 / NCTC 10582 / VPI-5482 / E50</strain>
    </source>
</reference>
<proteinExistence type="inferred from homology"/>
<sequence length="430" mass="48380">MNFVEELRWRGMLQDIMPGTEELLNKEQVTAYLGIDPTADSLHIGHLCGVMILRHLQRCGHKPLALIGGATGMIGDPSGKSAERNLLNEETLRHNQACIKKQLAKFLDFESDVPNRAELVNNYDWMKEFSFLDFVREVGKHITVNYMMAKDSVKRRLNGEARDGLSFTEFTYQLLQGYDFLHLYETKGCKLQMGGSDQWGNITTGAELIRRTNGGEVFALTCPLITKADGGKFGKTESGNIWLDPRYTSPYKFYQFWLNVSDSDAERYIKIFTSIEKEEIEALVAEHQQAPHLRALQKRLAKEVTIMVHSEEDYNAAVDASNILFGNATSESLRKLDEDTLLAVFEGVPQFEISRDALAEGVKAVDLFVDNAAVFASKGEMRKLVQGGGVSLNKEKLEAFDQVITTADLLDGKYLLVQRGKKNYFLLIAK</sequence>
<comment type="function">
    <text evidence="1">Catalyzes the attachment of tyrosine to tRNA(Tyr) in a two-step reaction: tyrosine is first activated by ATP to form Tyr-AMP and then transferred to the acceptor end of tRNA(Tyr).</text>
</comment>
<comment type="catalytic activity">
    <reaction evidence="1">
        <text>tRNA(Tyr) + L-tyrosine + ATP = L-tyrosyl-tRNA(Tyr) + AMP + diphosphate + H(+)</text>
        <dbReference type="Rhea" id="RHEA:10220"/>
        <dbReference type="Rhea" id="RHEA-COMP:9706"/>
        <dbReference type="Rhea" id="RHEA-COMP:9707"/>
        <dbReference type="ChEBI" id="CHEBI:15378"/>
        <dbReference type="ChEBI" id="CHEBI:30616"/>
        <dbReference type="ChEBI" id="CHEBI:33019"/>
        <dbReference type="ChEBI" id="CHEBI:58315"/>
        <dbReference type="ChEBI" id="CHEBI:78442"/>
        <dbReference type="ChEBI" id="CHEBI:78536"/>
        <dbReference type="ChEBI" id="CHEBI:456215"/>
        <dbReference type="EC" id="6.1.1.1"/>
    </reaction>
</comment>
<comment type="subunit">
    <text evidence="1">Homodimer.</text>
</comment>
<comment type="subcellular location">
    <subcellularLocation>
        <location evidence="1">Cytoplasm</location>
    </subcellularLocation>
</comment>
<comment type="similarity">
    <text evidence="1">Belongs to the class-I aminoacyl-tRNA synthetase family. TyrS type 1 subfamily.</text>
</comment>
<feature type="chain" id="PRO_0000234680" description="Tyrosine--tRNA ligase">
    <location>
        <begin position="1"/>
        <end position="430"/>
    </location>
</feature>
<feature type="domain" description="S4 RNA-binding" evidence="1">
    <location>
        <begin position="362"/>
        <end position="429"/>
    </location>
</feature>
<feature type="short sequence motif" description="'HIGH' region">
    <location>
        <begin position="37"/>
        <end position="46"/>
    </location>
</feature>
<feature type="short sequence motif" description="'KMSKS' region">
    <location>
        <begin position="232"/>
        <end position="236"/>
    </location>
</feature>
<feature type="binding site" evidence="1">
    <location>
        <position position="32"/>
    </location>
    <ligand>
        <name>L-tyrosine</name>
        <dbReference type="ChEBI" id="CHEBI:58315"/>
    </ligand>
</feature>
<feature type="binding site" evidence="1">
    <location>
        <position position="172"/>
    </location>
    <ligand>
        <name>L-tyrosine</name>
        <dbReference type="ChEBI" id="CHEBI:58315"/>
    </ligand>
</feature>
<feature type="binding site" evidence="1">
    <location>
        <position position="176"/>
    </location>
    <ligand>
        <name>L-tyrosine</name>
        <dbReference type="ChEBI" id="CHEBI:58315"/>
    </ligand>
</feature>
<feature type="binding site" evidence="1">
    <location>
        <position position="235"/>
    </location>
    <ligand>
        <name>ATP</name>
        <dbReference type="ChEBI" id="CHEBI:30616"/>
    </ligand>
</feature>
<accession>Q8A2S5</accession>
<dbReference type="EC" id="6.1.1.1" evidence="1"/>
<dbReference type="EMBL" id="AE015928">
    <property type="protein sequence ID" value="AAO78336.1"/>
    <property type="molecule type" value="Genomic_DNA"/>
</dbReference>
<dbReference type="RefSeq" id="NP_812142.1">
    <property type="nucleotide sequence ID" value="NC_004663.1"/>
</dbReference>
<dbReference type="RefSeq" id="WP_008762838.1">
    <property type="nucleotide sequence ID" value="NC_004663.1"/>
</dbReference>
<dbReference type="SMR" id="Q8A2S5"/>
<dbReference type="FunCoup" id="Q8A2S5">
    <property type="interactions" value="546"/>
</dbReference>
<dbReference type="STRING" id="226186.BT_3230"/>
<dbReference type="PaxDb" id="226186-BT_3230"/>
<dbReference type="EnsemblBacteria" id="AAO78336">
    <property type="protein sequence ID" value="AAO78336"/>
    <property type="gene ID" value="BT_3230"/>
</dbReference>
<dbReference type="GeneID" id="60924409"/>
<dbReference type="KEGG" id="bth:BT_3230"/>
<dbReference type="PATRIC" id="fig|226186.12.peg.3291"/>
<dbReference type="eggNOG" id="COG0162">
    <property type="taxonomic scope" value="Bacteria"/>
</dbReference>
<dbReference type="HOGENOM" id="CLU_024003_0_3_10"/>
<dbReference type="InParanoid" id="Q8A2S5"/>
<dbReference type="OrthoDB" id="9804243at2"/>
<dbReference type="Proteomes" id="UP000001414">
    <property type="component" value="Chromosome"/>
</dbReference>
<dbReference type="GO" id="GO:0005829">
    <property type="term" value="C:cytosol"/>
    <property type="evidence" value="ECO:0000318"/>
    <property type="project" value="GO_Central"/>
</dbReference>
<dbReference type="GO" id="GO:0005524">
    <property type="term" value="F:ATP binding"/>
    <property type="evidence" value="ECO:0007669"/>
    <property type="project" value="UniProtKB-UniRule"/>
</dbReference>
<dbReference type="GO" id="GO:0003723">
    <property type="term" value="F:RNA binding"/>
    <property type="evidence" value="ECO:0007669"/>
    <property type="project" value="UniProtKB-KW"/>
</dbReference>
<dbReference type="GO" id="GO:0004831">
    <property type="term" value="F:tyrosine-tRNA ligase activity"/>
    <property type="evidence" value="ECO:0000318"/>
    <property type="project" value="GO_Central"/>
</dbReference>
<dbReference type="GO" id="GO:0043039">
    <property type="term" value="P:tRNA aminoacylation"/>
    <property type="evidence" value="ECO:0000318"/>
    <property type="project" value="GO_Central"/>
</dbReference>
<dbReference type="GO" id="GO:0006437">
    <property type="term" value="P:tyrosyl-tRNA aminoacylation"/>
    <property type="evidence" value="ECO:0007669"/>
    <property type="project" value="UniProtKB-UniRule"/>
</dbReference>
<dbReference type="CDD" id="cd00805">
    <property type="entry name" value="TyrRS_core"/>
    <property type="match status" value="1"/>
</dbReference>
<dbReference type="FunFam" id="1.10.240.10:FF:000001">
    <property type="entry name" value="Tyrosine--tRNA ligase"/>
    <property type="match status" value="1"/>
</dbReference>
<dbReference type="FunFam" id="3.10.290.10:FF:000014">
    <property type="entry name" value="Tyrosine--tRNA ligase"/>
    <property type="match status" value="1"/>
</dbReference>
<dbReference type="FunFam" id="3.40.50.620:FF:000008">
    <property type="entry name" value="Tyrosine--tRNA ligase"/>
    <property type="match status" value="1"/>
</dbReference>
<dbReference type="Gene3D" id="3.40.50.620">
    <property type="entry name" value="HUPs"/>
    <property type="match status" value="1"/>
</dbReference>
<dbReference type="Gene3D" id="3.10.290.10">
    <property type="entry name" value="RNA-binding S4 domain"/>
    <property type="match status" value="1"/>
</dbReference>
<dbReference type="Gene3D" id="1.10.240.10">
    <property type="entry name" value="Tyrosyl-Transfer RNA Synthetase"/>
    <property type="match status" value="1"/>
</dbReference>
<dbReference type="HAMAP" id="MF_02006">
    <property type="entry name" value="Tyr_tRNA_synth_type1"/>
    <property type="match status" value="1"/>
</dbReference>
<dbReference type="InterPro" id="IPR001412">
    <property type="entry name" value="aa-tRNA-synth_I_CS"/>
</dbReference>
<dbReference type="InterPro" id="IPR002305">
    <property type="entry name" value="aa-tRNA-synth_Ic"/>
</dbReference>
<dbReference type="InterPro" id="IPR014729">
    <property type="entry name" value="Rossmann-like_a/b/a_fold"/>
</dbReference>
<dbReference type="InterPro" id="IPR036986">
    <property type="entry name" value="S4_RNA-bd_sf"/>
</dbReference>
<dbReference type="InterPro" id="IPR054608">
    <property type="entry name" value="SYY-like_C"/>
</dbReference>
<dbReference type="InterPro" id="IPR002307">
    <property type="entry name" value="Tyr-tRNA-ligase"/>
</dbReference>
<dbReference type="InterPro" id="IPR024088">
    <property type="entry name" value="Tyr-tRNA-ligase_bac-type"/>
</dbReference>
<dbReference type="InterPro" id="IPR024107">
    <property type="entry name" value="Tyr-tRNA-ligase_bac_1"/>
</dbReference>
<dbReference type="NCBIfam" id="TIGR00234">
    <property type="entry name" value="tyrS"/>
    <property type="match status" value="1"/>
</dbReference>
<dbReference type="PANTHER" id="PTHR11766:SF0">
    <property type="entry name" value="TYROSINE--TRNA LIGASE, MITOCHONDRIAL"/>
    <property type="match status" value="1"/>
</dbReference>
<dbReference type="PANTHER" id="PTHR11766">
    <property type="entry name" value="TYROSYL-TRNA SYNTHETASE"/>
    <property type="match status" value="1"/>
</dbReference>
<dbReference type="Pfam" id="PF22421">
    <property type="entry name" value="SYY_C-terminal"/>
    <property type="match status" value="1"/>
</dbReference>
<dbReference type="Pfam" id="PF00579">
    <property type="entry name" value="tRNA-synt_1b"/>
    <property type="match status" value="1"/>
</dbReference>
<dbReference type="PRINTS" id="PR01040">
    <property type="entry name" value="TRNASYNTHTYR"/>
</dbReference>
<dbReference type="SUPFAM" id="SSF55174">
    <property type="entry name" value="Alpha-L RNA-binding motif"/>
    <property type="match status" value="1"/>
</dbReference>
<dbReference type="SUPFAM" id="SSF52374">
    <property type="entry name" value="Nucleotidylyl transferase"/>
    <property type="match status" value="1"/>
</dbReference>
<dbReference type="PROSITE" id="PS00178">
    <property type="entry name" value="AA_TRNA_LIGASE_I"/>
    <property type="match status" value="1"/>
</dbReference>
<dbReference type="PROSITE" id="PS50889">
    <property type="entry name" value="S4"/>
    <property type="match status" value="1"/>
</dbReference>
<name>SYY_BACTN</name>
<protein>
    <recommendedName>
        <fullName evidence="1">Tyrosine--tRNA ligase</fullName>
        <ecNumber evidence="1">6.1.1.1</ecNumber>
    </recommendedName>
    <alternativeName>
        <fullName evidence="1">Tyrosyl-tRNA synthetase</fullName>
        <shortName evidence="1">TyrRS</shortName>
    </alternativeName>
</protein>
<keyword id="KW-0030">Aminoacyl-tRNA synthetase</keyword>
<keyword id="KW-0067">ATP-binding</keyword>
<keyword id="KW-0963">Cytoplasm</keyword>
<keyword id="KW-0436">Ligase</keyword>
<keyword id="KW-0547">Nucleotide-binding</keyword>
<keyword id="KW-0648">Protein biosynthesis</keyword>
<keyword id="KW-1185">Reference proteome</keyword>
<keyword id="KW-0694">RNA-binding</keyword>